<keyword id="KW-0997">Cell inner membrane</keyword>
<keyword id="KW-1003">Cell membrane</keyword>
<keyword id="KW-0472">Membrane</keyword>
<keyword id="KW-0520">NAD</keyword>
<keyword id="KW-0560">Oxidoreductase</keyword>
<name>KEFG_YERPN</name>
<feature type="chain" id="PRO_1000068488" description="Glutathione-regulated potassium-efflux system ancillary protein KefG">
    <location>
        <begin position="1"/>
        <end position="182"/>
    </location>
</feature>
<dbReference type="EC" id="1.6.5.2" evidence="1"/>
<dbReference type="EMBL" id="CP000305">
    <property type="protein sequence ID" value="ABG20204.1"/>
    <property type="molecule type" value="Genomic_DNA"/>
</dbReference>
<dbReference type="EMBL" id="ACNQ01000019">
    <property type="protein sequence ID" value="EEO74793.1"/>
    <property type="molecule type" value="Genomic_DNA"/>
</dbReference>
<dbReference type="RefSeq" id="WP_002215966.1">
    <property type="nucleotide sequence ID" value="NZ_ACNQ01000019.1"/>
</dbReference>
<dbReference type="SMR" id="Q1CCS6"/>
<dbReference type="GeneID" id="57974413"/>
<dbReference type="KEGG" id="ypn:YPN_3877"/>
<dbReference type="HOGENOM" id="CLU_058643_0_1_6"/>
<dbReference type="Proteomes" id="UP000008936">
    <property type="component" value="Chromosome"/>
</dbReference>
<dbReference type="GO" id="GO:0005886">
    <property type="term" value="C:plasma membrane"/>
    <property type="evidence" value="ECO:0007669"/>
    <property type="project" value="UniProtKB-SubCell"/>
</dbReference>
<dbReference type="GO" id="GO:0009055">
    <property type="term" value="F:electron transfer activity"/>
    <property type="evidence" value="ECO:0007669"/>
    <property type="project" value="TreeGrafter"/>
</dbReference>
<dbReference type="GO" id="GO:0010181">
    <property type="term" value="F:FMN binding"/>
    <property type="evidence" value="ECO:0007669"/>
    <property type="project" value="TreeGrafter"/>
</dbReference>
<dbReference type="GO" id="GO:0050136">
    <property type="term" value="F:NADH:ubiquinone reductase (non-electrogenic) activity"/>
    <property type="evidence" value="ECO:0007669"/>
    <property type="project" value="RHEA"/>
</dbReference>
<dbReference type="GO" id="GO:0008753">
    <property type="term" value="F:NADPH dehydrogenase (quinone) activity"/>
    <property type="evidence" value="ECO:0007669"/>
    <property type="project" value="RHEA"/>
</dbReference>
<dbReference type="GO" id="GO:1901381">
    <property type="term" value="P:positive regulation of potassium ion transmembrane transport"/>
    <property type="evidence" value="ECO:0007669"/>
    <property type="project" value="UniProtKB-UniRule"/>
</dbReference>
<dbReference type="GO" id="GO:0006813">
    <property type="term" value="P:potassium ion transport"/>
    <property type="evidence" value="ECO:0007669"/>
    <property type="project" value="InterPro"/>
</dbReference>
<dbReference type="FunFam" id="3.40.50.360:FF:000013">
    <property type="entry name" value="Glutathione-regulated potassium-efflux system ancillary protein KefG"/>
    <property type="match status" value="1"/>
</dbReference>
<dbReference type="Gene3D" id="3.40.50.360">
    <property type="match status" value="1"/>
</dbReference>
<dbReference type="HAMAP" id="MF_01415">
    <property type="entry name" value="K_H_efflux_KefG"/>
    <property type="match status" value="1"/>
</dbReference>
<dbReference type="InterPro" id="IPR003680">
    <property type="entry name" value="Flavodoxin_fold"/>
</dbReference>
<dbReference type="InterPro" id="IPR029039">
    <property type="entry name" value="Flavoprotein-like_sf"/>
</dbReference>
<dbReference type="InterPro" id="IPR023947">
    <property type="entry name" value="K_H_efflux_KefG"/>
</dbReference>
<dbReference type="InterPro" id="IPR046980">
    <property type="entry name" value="KefG/KefF"/>
</dbReference>
<dbReference type="NCBIfam" id="NF003430">
    <property type="entry name" value="PRK04930.1"/>
    <property type="match status" value="1"/>
</dbReference>
<dbReference type="PANTHER" id="PTHR47307">
    <property type="entry name" value="GLUTATHIONE-REGULATED POTASSIUM-EFFLUX SYSTEM ANCILLARY PROTEIN KEFG"/>
    <property type="match status" value="1"/>
</dbReference>
<dbReference type="PANTHER" id="PTHR47307:SF1">
    <property type="entry name" value="GLUTATHIONE-REGULATED POTASSIUM-EFFLUX SYSTEM ANCILLARY PROTEIN KEFG"/>
    <property type="match status" value="1"/>
</dbReference>
<dbReference type="Pfam" id="PF02525">
    <property type="entry name" value="Flavodoxin_2"/>
    <property type="match status" value="1"/>
</dbReference>
<dbReference type="SUPFAM" id="SSF52218">
    <property type="entry name" value="Flavoproteins"/>
    <property type="match status" value="1"/>
</dbReference>
<accession>Q1CCS6</accession>
<accession>D1Q2P0</accession>
<gene>
    <name evidence="1" type="primary">kefG</name>
    <name type="ordered locus">YPN_3877</name>
    <name type="ORF">YP516_4403</name>
</gene>
<evidence type="ECO:0000255" key="1">
    <source>
        <dbReference type="HAMAP-Rule" id="MF_01415"/>
    </source>
</evidence>
<sequence>MLQPPKVLLLYAHPESQDSVANRVLLQPVQQLEHVTVHDLYAHYPDFFIDIHHEQQLLRDHQVIVFQHPLYTYSCPALLKEWLDRVLARGFANGVGGHALTGKHWRSVITTGEQEGTYRIGGYNRYPMEDILRPFELTAAMCHMHWINPMIIYWARRQKPETLASHAQAYVQWLQSPLTRGL</sequence>
<organism>
    <name type="scientific">Yersinia pestis bv. Antiqua (strain Nepal516)</name>
    <dbReference type="NCBI Taxonomy" id="377628"/>
    <lineage>
        <taxon>Bacteria</taxon>
        <taxon>Pseudomonadati</taxon>
        <taxon>Pseudomonadota</taxon>
        <taxon>Gammaproteobacteria</taxon>
        <taxon>Enterobacterales</taxon>
        <taxon>Yersiniaceae</taxon>
        <taxon>Yersinia</taxon>
    </lineage>
</organism>
<proteinExistence type="inferred from homology"/>
<comment type="function">
    <text evidence="1">Regulatory subunit of a potassium efflux system that confers protection against electrophiles. Required for full activity of KefB.</text>
</comment>
<comment type="catalytic activity">
    <reaction evidence="1">
        <text>a quinone + NADH + H(+) = a quinol + NAD(+)</text>
        <dbReference type="Rhea" id="RHEA:46160"/>
        <dbReference type="ChEBI" id="CHEBI:15378"/>
        <dbReference type="ChEBI" id="CHEBI:24646"/>
        <dbReference type="ChEBI" id="CHEBI:57540"/>
        <dbReference type="ChEBI" id="CHEBI:57945"/>
        <dbReference type="ChEBI" id="CHEBI:132124"/>
        <dbReference type="EC" id="1.6.5.2"/>
    </reaction>
</comment>
<comment type="catalytic activity">
    <reaction evidence="1">
        <text>a quinone + NADPH + H(+) = a quinol + NADP(+)</text>
        <dbReference type="Rhea" id="RHEA:46164"/>
        <dbReference type="ChEBI" id="CHEBI:15378"/>
        <dbReference type="ChEBI" id="CHEBI:24646"/>
        <dbReference type="ChEBI" id="CHEBI:57783"/>
        <dbReference type="ChEBI" id="CHEBI:58349"/>
        <dbReference type="ChEBI" id="CHEBI:132124"/>
        <dbReference type="EC" id="1.6.5.2"/>
    </reaction>
</comment>
<comment type="subunit">
    <text evidence="1">Interacts with KefB.</text>
</comment>
<comment type="subcellular location">
    <subcellularLocation>
        <location evidence="1">Cell inner membrane</location>
        <topology evidence="1">Peripheral membrane protein</topology>
        <orientation evidence="1">Cytoplasmic side</orientation>
    </subcellularLocation>
</comment>
<comment type="similarity">
    <text evidence="1">Belongs to the NAD(P)H dehydrogenase (quinone) family. KefG subfamily.</text>
</comment>
<protein>
    <recommendedName>
        <fullName evidence="1">Glutathione-regulated potassium-efflux system ancillary protein KefG</fullName>
    </recommendedName>
    <alternativeName>
        <fullName evidence="1">Putative quinone oxidoreductase KefG</fullName>
        <ecNumber evidence="1">1.6.5.2</ecNumber>
    </alternativeName>
</protein>
<reference key="1">
    <citation type="journal article" date="2006" name="J. Bacteriol.">
        <title>Complete genome sequence of Yersinia pestis strains Antiqua and Nepal516: evidence of gene reduction in an emerging pathogen.</title>
        <authorList>
            <person name="Chain P.S.G."/>
            <person name="Hu P."/>
            <person name="Malfatti S.A."/>
            <person name="Radnedge L."/>
            <person name="Larimer F."/>
            <person name="Vergez L.M."/>
            <person name="Worsham P."/>
            <person name="Chu M.C."/>
            <person name="Andersen G.L."/>
        </authorList>
    </citation>
    <scope>NUCLEOTIDE SEQUENCE [LARGE SCALE GENOMIC DNA]</scope>
    <source>
        <strain>Nepal516</strain>
    </source>
</reference>
<reference key="2">
    <citation type="submission" date="2009-04" db="EMBL/GenBank/DDBJ databases">
        <title>Yersinia pestis Nepal516A whole genome shotgun sequencing project.</title>
        <authorList>
            <person name="Plunkett G. III"/>
            <person name="Anderson B.D."/>
            <person name="Baumler D.J."/>
            <person name="Burland V."/>
            <person name="Cabot E.L."/>
            <person name="Glasner J.D."/>
            <person name="Mau B."/>
            <person name="Neeno-Eckwall E."/>
            <person name="Perna N.T."/>
            <person name="Munk A.C."/>
            <person name="Tapia R."/>
            <person name="Green L.D."/>
            <person name="Rogers Y.C."/>
            <person name="Detter J.C."/>
            <person name="Bruce D.C."/>
            <person name="Brettin T.S."/>
        </authorList>
    </citation>
    <scope>NUCLEOTIDE SEQUENCE [LARGE SCALE GENOMIC DNA]</scope>
    <source>
        <strain>Nepal516</strain>
    </source>
</reference>